<gene>
    <name evidence="1" type="primary">PAN2</name>
    <name type="ordered locus">CNBD1450</name>
</gene>
<comment type="function">
    <text evidence="1">Catalytic subunit of the poly(A)-nuclease (PAN) deadenylation complex, one of two cytoplasmic mRNA deadenylases involved in mRNA turnover. PAN specifically shortens poly(A) tails of RNA and the activity is stimulated by poly(A)-binding protein PAB1. PAN deadenylation is followed by rapid degradation of the shortened mRNA tails by the CCR4-NOT complex. Deadenylated mRNAs are then degraded by two alternative mechanisms, namely exosome-mediated 3'-5' exonucleolytic degradation, or deadenylation-dependent mRNA decaping and subsequent 5'-3' exonucleolytic degradation by XRN1. May also be involved in post-transcriptional maturation of mRNA poly(A) tails.</text>
</comment>
<comment type="catalytic activity">
    <reaction evidence="1">
        <text>Exonucleolytic cleavage of poly(A) to 5'-AMP.</text>
        <dbReference type="EC" id="3.1.13.4"/>
    </reaction>
</comment>
<comment type="cofactor">
    <cofactor evidence="1">
        <name>a divalent metal cation</name>
        <dbReference type="ChEBI" id="CHEBI:60240"/>
    </cofactor>
    <text evidence="1">Binds 2 metal cations per subunit in the catalytic exonuclease domain.</text>
</comment>
<comment type="activity regulation">
    <text evidence="1">Positively regulated by the regulatory subunit PAN3.</text>
</comment>
<comment type="subunit">
    <text evidence="1">Forms a heterotrimer with an asymmetric homodimer of the regulatory subunit PAN3 to form the poly(A)-nuclease (PAN) deadenylation complex.</text>
</comment>
<comment type="subcellular location">
    <subcellularLocation>
        <location evidence="1">Cytoplasm</location>
    </subcellularLocation>
</comment>
<comment type="domain">
    <text evidence="1">Contains a pseudo-UCH domain. This ubiquitin C-terminal hydrolase (UCH)-like or ubiquitin specific protease (USP)-like domain is predicted to be catalytically inactive because it lacks the active site catalytic triad characteristic of thiol proteases, with residues at the equivalent structural positions that are incompatible with catalysis, and it cannot bind ubiquitin. It functions as a structural scaffold for intra- and intermolecular interactions in the complex.</text>
</comment>
<comment type="domain">
    <text evidence="1">The linker, or PAN3 interaction domain (PID), between the WD40 repeats and the pseudo-UCH domain mediates interaction with PAN3.</text>
</comment>
<comment type="similarity">
    <text evidence="1">Belongs to the peptidase C19 family. PAN2 subfamily.</text>
</comment>
<organism>
    <name type="scientific">Cryptococcus neoformans var. neoformans serotype D (strain B-3501A)</name>
    <name type="common">Filobasidiella neoformans</name>
    <dbReference type="NCBI Taxonomy" id="283643"/>
    <lineage>
        <taxon>Eukaryota</taxon>
        <taxon>Fungi</taxon>
        <taxon>Dikarya</taxon>
        <taxon>Basidiomycota</taxon>
        <taxon>Agaricomycotina</taxon>
        <taxon>Tremellomycetes</taxon>
        <taxon>Tremellales</taxon>
        <taxon>Cryptococcaceae</taxon>
        <taxon>Cryptococcus</taxon>
        <taxon>Cryptococcus neoformans species complex</taxon>
    </lineage>
</organism>
<sequence length="1183" mass="130525">MNYNPLHLLPLPPTALDPKPIPTSLTLDPFSDVLWVGASSGIVSALCSPLTLARNVHFPAHGCKIGGGGFSAQGVSAVREVRVTDRDVWTLTEGGIGGRKRGGAPKWIVSDVTRSLRTMSPNPTNSHELITGGSGSLLLANTARGEVVRSIENSSPVVKLAPLHRTVLAAGLSGQVTVLDPRTGFKAAQNISPVQAHTGGLSGADVQGNIVATWGWTHMQGHPLPDPLIRLYDVRALRPLPPISFSSGPAFVLLHPSSSSHIVVSSQQGMLQTIDMSLGPSATVFQQLDVSSYITSMALSSRGDYLAFGDGDGQLHVWTTNETGENAAVDENGSIVLPPFNGYDGVKPEWPDQVDPLPTIAWEESTPLNLVGMPYYNEALLSQFPSECYATSTSPLFNPPATIPQPVLSSMKMVDFVGYAPNPKELRGKRYVLRAVPGAEGRARGKGRRDSGPRFRSEKDKKGTYKDKEEIEEELNDGEVPKYYRKVEIKYSKFGIEDFDFEFYNRTNYSGLETDILNSYTNSLLQALHYTLPLRAIATAHICVDCKKEHCLLCEAGFLFRMLEDAKGRNCQASNFSRAFSATSQAYALGLMDENTNSKSTAPYGSLIQNFNRWLLSTFSTESIVDGETFHLRPFPQKTSGLDGLSMNDGPSAIDQVLGVKIKTTNTCRHCGFVSSRDSTLHVVDLVYPKKMNPRLSFSDILRSSLIRDSTTKAICSSCKAFAPLDSRRSLSPSSGHPLPPVLSVNAMVTNSDVYGFWKDKKDVKEKDGVRRFLPKRVTIREVGKLENGQEEGVKYSIRSMVVQIQESPDAVAHLVSFVKMPSKDGSSAWIMFNDFLVRPVSEDEVLSFPDQWKVPAVIILERENAEELLNLEVLPKELDREILFKDVSIAWNRKQDMIKHKILQREEMPKRGTLVAIDAEFVALQQEEMEFRSDGTKNILRPSHMSLARVSVLRGEGEMEGKPFIDDYIHTSEAVVDYLTEFSGIKAGDLDPNNSPHTLVPLKVAYKKLRLLVDLGCIFVGHGLSKDFRTINIFVPPEQVMDTVLIYTLPGSQRKLSLRFLAWYLLHQDIQTNSHDSIEDAHFALLLCKLWMDYASESEEAFEIVMEDIFAEGKKLAFKPPSSAGNMMAEQQLSPVSFPPLSNGDQTVARAVVKSRMATPPPPTKLGLPQWASQNSPSPLRR</sequence>
<evidence type="ECO:0000255" key="1">
    <source>
        <dbReference type="HAMAP-Rule" id="MF_03182"/>
    </source>
</evidence>
<evidence type="ECO:0000256" key="2">
    <source>
        <dbReference type="SAM" id="MobiDB-lite"/>
    </source>
</evidence>
<feature type="chain" id="PRO_0000410214" description="PAN2-PAN3 deadenylation complex catalytic subunit PAN2">
    <location>
        <begin position="1"/>
        <end position="1183"/>
    </location>
</feature>
<feature type="repeat" description="WD 1" evidence="1">
    <location>
        <begin position="150"/>
        <end position="189"/>
    </location>
</feature>
<feature type="repeat" description="WD 2" evidence="1">
    <location>
        <begin position="289"/>
        <end position="328"/>
    </location>
</feature>
<feature type="domain" description="USP" evidence="1">
    <location>
        <begin position="479"/>
        <end position="864"/>
    </location>
</feature>
<feature type="domain" description="Exonuclease" evidence="1">
    <location>
        <begin position="916"/>
        <end position="1085"/>
    </location>
</feature>
<feature type="region of interest" description="Linker" evidence="1">
    <location>
        <begin position="331"/>
        <end position="478"/>
    </location>
</feature>
<feature type="region of interest" description="Disordered" evidence="2">
    <location>
        <begin position="439"/>
        <end position="470"/>
    </location>
</feature>
<feature type="region of interest" description="Disordered" evidence="2">
    <location>
        <begin position="1155"/>
        <end position="1183"/>
    </location>
</feature>
<feature type="compositionally biased region" description="Basic and acidic residues" evidence="2">
    <location>
        <begin position="448"/>
        <end position="469"/>
    </location>
</feature>
<feature type="compositionally biased region" description="Polar residues" evidence="2">
    <location>
        <begin position="1172"/>
        <end position="1183"/>
    </location>
</feature>
<feature type="binding site" evidence="1">
    <location>
        <position position="919"/>
    </location>
    <ligand>
        <name>a divalent metal cation</name>
        <dbReference type="ChEBI" id="CHEBI:60240"/>
        <note>catalytic</note>
    </ligand>
</feature>
<feature type="binding site" evidence="1">
    <location>
        <position position="921"/>
    </location>
    <ligand>
        <name>a divalent metal cation</name>
        <dbReference type="ChEBI" id="CHEBI:60240"/>
        <note>catalytic</note>
    </ligand>
</feature>
<feature type="binding site" evidence="1">
    <location>
        <position position="1028"/>
    </location>
    <ligand>
        <name>a divalent metal cation</name>
        <dbReference type="ChEBI" id="CHEBI:60240"/>
        <note>catalytic</note>
    </ligand>
</feature>
<feature type="binding site" evidence="1">
    <location>
        <position position="1081"/>
    </location>
    <ligand>
        <name>a divalent metal cation</name>
        <dbReference type="ChEBI" id="CHEBI:60240"/>
        <note>catalytic</note>
    </ligand>
</feature>
<protein>
    <recommendedName>
        <fullName evidence="1">PAN2-PAN3 deadenylation complex catalytic subunit PAN2</fullName>
        <ecNumber evidence="1">3.1.13.4</ecNumber>
    </recommendedName>
    <alternativeName>
        <fullName evidence="1">PAB1P-dependent poly(A)-specific ribonuclease</fullName>
    </alternativeName>
    <alternativeName>
        <fullName evidence="1">Poly(A)-nuclease deadenylation complex subunit 2</fullName>
        <shortName evidence="1">PAN deadenylation complex subunit 2</shortName>
    </alternativeName>
</protein>
<dbReference type="EC" id="3.1.13.4" evidence="1"/>
<dbReference type="EMBL" id="AAEY01000019">
    <property type="protein sequence ID" value="EAL21450.1"/>
    <property type="molecule type" value="Genomic_DNA"/>
</dbReference>
<dbReference type="RefSeq" id="XP_776097.1">
    <property type="nucleotide sequence ID" value="XM_771004.1"/>
</dbReference>
<dbReference type="SMR" id="P0CQ09"/>
<dbReference type="EnsemblFungi" id="AAW43174">
    <property type="protein sequence ID" value="AAW43174"/>
    <property type="gene ID" value="CND04900"/>
</dbReference>
<dbReference type="GeneID" id="4935534"/>
<dbReference type="KEGG" id="cnb:CNBD1450"/>
<dbReference type="VEuPathDB" id="FungiDB:CNBD1450"/>
<dbReference type="HOGENOM" id="CLU_002369_1_0_1"/>
<dbReference type="OrthoDB" id="2799at5206"/>
<dbReference type="GO" id="GO:0000932">
    <property type="term" value="C:P-body"/>
    <property type="evidence" value="ECO:0007669"/>
    <property type="project" value="TreeGrafter"/>
</dbReference>
<dbReference type="GO" id="GO:0031251">
    <property type="term" value="C:PAN complex"/>
    <property type="evidence" value="ECO:0007669"/>
    <property type="project" value="UniProtKB-UniRule"/>
</dbReference>
<dbReference type="GO" id="GO:0046872">
    <property type="term" value="F:metal ion binding"/>
    <property type="evidence" value="ECO:0007669"/>
    <property type="project" value="UniProtKB-KW"/>
</dbReference>
<dbReference type="GO" id="GO:0003676">
    <property type="term" value="F:nucleic acid binding"/>
    <property type="evidence" value="ECO:0007669"/>
    <property type="project" value="InterPro"/>
</dbReference>
<dbReference type="GO" id="GO:0004535">
    <property type="term" value="F:poly(A)-specific ribonuclease activity"/>
    <property type="evidence" value="ECO:0007669"/>
    <property type="project" value="UniProtKB-UniRule"/>
</dbReference>
<dbReference type="GO" id="GO:0006397">
    <property type="term" value="P:mRNA processing"/>
    <property type="evidence" value="ECO:0007669"/>
    <property type="project" value="UniProtKB-KW"/>
</dbReference>
<dbReference type="GO" id="GO:0000289">
    <property type="term" value="P:nuclear-transcribed mRNA poly(A) tail shortening"/>
    <property type="evidence" value="ECO:0007669"/>
    <property type="project" value="UniProtKB-UniRule"/>
</dbReference>
<dbReference type="CDD" id="cd06143">
    <property type="entry name" value="PAN2_exo"/>
    <property type="match status" value="1"/>
</dbReference>
<dbReference type="CDD" id="cd02672">
    <property type="entry name" value="Peptidase_C19P"/>
    <property type="match status" value="1"/>
</dbReference>
<dbReference type="FunFam" id="3.30.420.10:FF:000028">
    <property type="entry name" value="PAN2-PAN3 deadenylation complex catalytic subunit PAN2"/>
    <property type="match status" value="1"/>
</dbReference>
<dbReference type="FunFam" id="3.90.70.10:FF:000162">
    <property type="entry name" value="PAN2-PAN3 deadenylation complex catalytic subunit PAN2"/>
    <property type="match status" value="1"/>
</dbReference>
<dbReference type="Gene3D" id="3.90.70.10">
    <property type="entry name" value="Cysteine proteinases"/>
    <property type="match status" value="1"/>
</dbReference>
<dbReference type="Gene3D" id="3.30.420.10">
    <property type="entry name" value="Ribonuclease H-like superfamily/Ribonuclease H"/>
    <property type="match status" value="1"/>
</dbReference>
<dbReference type="Gene3D" id="2.130.10.10">
    <property type="entry name" value="YVTN repeat-like/Quinoprotein amine dehydrogenase"/>
    <property type="match status" value="1"/>
</dbReference>
<dbReference type="HAMAP" id="MF_03182">
    <property type="entry name" value="PAN2"/>
    <property type="match status" value="1"/>
</dbReference>
<dbReference type="InterPro" id="IPR013520">
    <property type="entry name" value="Exonuclease_RNaseT/DNA_pol3"/>
</dbReference>
<dbReference type="InterPro" id="IPR030843">
    <property type="entry name" value="PAN2"/>
</dbReference>
<dbReference type="InterPro" id="IPR050785">
    <property type="entry name" value="PAN2-PAN3_catalytic_subunit"/>
</dbReference>
<dbReference type="InterPro" id="IPR048841">
    <property type="entry name" value="PAN2_N"/>
</dbReference>
<dbReference type="InterPro" id="IPR028881">
    <property type="entry name" value="PAN2_UCH_dom"/>
</dbReference>
<dbReference type="InterPro" id="IPR038765">
    <property type="entry name" value="Papain-like_cys_pep_sf"/>
</dbReference>
<dbReference type="InterPro" id="IPR011047">
    <property type="entry name" value="Quinoprotein_ADH-like_sf"/>
</dbReference>
<dbReference type="InterPro" id="IPR012337">
    <property type="entry name" value="RNaseH-like_sf"/>
</dbReference>
<dbReference type="InterPro" id="IPR036397">
    <property type="entry name" value="RNaseH_sf"/>
</dbReference>
<dbReference type="InterPro" id="IPR028889">
    <property type="entry name" value="USP_dom"/>
</dbReference>
<dbReference type="InterPro" id="IPR015943">
    <property type="entry name" value="WD40/YVTN_repeat-like_dom_sf"/>
</dbReference>
<dbReference type="InterPro" id="IPR001680">
    <property type="entry name" value="WD40_rpt"/>
</dbReference>
<dbReference type="PANTHER" id="PTHR15728">
    <property type="entry name" value="DEADENYLATION COMPLEX CATALYTIC SUBUNIT PAN2"/>
    <property type="match status" value="1"/>
</dbReference>
<dbReference type="PANTHER" id="PTHR15728:SF0">
    <property type="entry name" value="PAN2-PAN3 DEADENYLATION COMPLEX CATALYTIC SUBUNIT PAN2"/>
    <property type="match status" value="1"/>
</dbReference>
<dbReference type="Pfam" id="PF20770">
    <property type="entry name" value="PAN2_N"/>
    <property type="match status" value="1"/>
</dbReference>
<dbReference type="Pfam" id="PF00929">
    <property type="entry name" value="RNase_T"/>
    <property type="match status" value="1"/>
</dbReference>
<dbReference type="Pfam" id="PF13423">
    <property type="entry name" value="UCH_1"/>
    <property type="match status" value="1"/>
</dbReference>
<dbReference type="SMART" id="SM00479">
    <property type="entry name" value="EXOIII"/>
    <property type="match status" value="1"/>
</dbReference>
<dbReference type="SMART" id="SM00320">
    <property type="entry name" value="WD40"/>
    <property type="match status" value="2"/>
</dbReference>
<dbReference type="SUPFAM" id="SSF54001">
    <property type="entry name" value="Cysteine proteinases"/>
    <property type="match status" value="1"/>
</dbReference>
<dbReference type="SUPFAM" id="SSF50998">
    <property type="entry name" value="Quinoprotein alcohol dehydrogenase-like"/>
    <property type="match status" value="1"/>
</dbReference>
<dbReference type="SUPFAM" id="SSF53098">
    <property type="entry name" value="Ribonuclease H-like"/>
    <property type="match status" value="1"/>
</dbReference>
<dbReference type="PROSITE" id="PS50235">
    <property type="entry name" value="USP_3"/>
    <property type="match status" value="1"/>
</dbReference>
<name>PAN2_CRYNB</name>
<keyword id="KW-0963">Cytoplasm</keyword>
<keyword id="KW-0269">Exonuclease</keyword>
<keyword id="KW-0378">Hydrolase</keyword>
<keyword id="KW-0479">Metal-binding</keyword>
<keyword id="KW-0507">mRNA processing</keyword>
<keyword id="KW-0540">Nuclease</keyword>
<keyword id="KW-0677">Repeat</keyword>
<keyword id="KW-0853">WD repeat</keyword>
<accession>P0CQ09</accession>
<accession>Q55UG2</accession>
<accession>Q5KHY2</accession>
<proteinExistence type="inferred from homology"/>
<reference key="1">
    <citation type="journal article" date="2005" name="Science">
        <title>The genome of the basidiomycetous yeast and human pathogen Cryptococcus neoformans.</title>
        <authorList>
            <person name="Loftus B.J."/>
            <person name="Fung E."/>
            <person name="Roncaglia P."/>
            <person name="Rowley D."/>
            <person name="Amedeo P."/>
            <person name="Bruno D."/>
            <person name="Vamathevan J."/>
            <person name="Miranda M."/>
            <person name="Anderson I.J."/>
            <person name="Fraser J.A."/>
            <person name="Allen J.E."/>
            <person name="Bosdet I.E."/>
            <person name="Brent M.R."/>
            <person name="Chiu R."/>
            <person name="Doering T.L."/>
            <person name="Donlin M.J."/>
            <person name="D'Souza C.A."/>
            <person name="Fox D.S."/>
            <person name="Grinberg V."/>
            <person name="Fu J."/>
            <person name="Fukushima M."/>
            <person name="Haas B.J."/>
            <person name="Huang J.C."/>
            <person name="Janbon G."/>
            <person name="Jones S.J.M."/>
            <person name="Koo H.L."/>
            <person name="Krzywinski M.I."/>
            <person name="Kwon-Chung K.J."/>
            <person name="Lengeler K.B."/>
            <person name="Maiti R."/>
            <person name="Marra M.A."/>
            <person name="Marra R.E."/>
            <person name="Mathewson C.A."/>
            <person name="Mitchell T.G."/>
            <person name="Pertea M."/>
            <person name="Riggs F.R."/>
            <person name="Salzberg S.L."/>
            <person name="Schein J.E."/>
            <person name="Shvartsbeyn A."/>
            <person name="Shin H."/>
            <person name="Shumway M."/>
            <person name="Specht C.A."/>
            <person name="Suh B.B."/>
            <person name="Tenney A."/>
            <person name="Utterback T.R."/>
            <person name="Wickes B.L."/>
            <person name="Wortman J.R."/>
            <person name="Wye N.H."/>
            <person name="Kronstad J.W."/>
            <person name="Lodge J.K."/>
            <person name="Heitman J."/>
            <person name="Davis R.W."/>
            <person name="Fraser C.M."/>
            <person name="Hyman R.W."/>
        </authorList>
    </citation>
    <scope>NUCLEOTIDE SEQUENCE [LARGE SCALE GENOMIC DNA]</scope>
    <source>
        <strain>B-3501A</strain>
    </source>
</reference>